<evidence type="ECO:0000255" key="1">
    <source>
        <dbReference type="HAMAP-Rule" id="MF_00680"/>
    </source>
</evidence>
<reference key="1">
    <citation type="journal article" date="2004" name="Proc. Natl. Acad. Sci. U.S.A.">
        <title>Genome sequence of the enterobacterial phytopathogen Erwinia carotovora subsp. atroseptica and characterization of virulence factors.</title>
        <authorList>
            <person name="Bell K.S."/>
            <person name="Sebaihia M."/>
            <person name="Pritchard L."/>
            <person name="Holden M.T.G."/>
            <person name="Hyman L.J."/>
            <person name="Holeva M.C."/>
            <person name="Thomson N.R."/>
            <person name="Bentley S.D."/>
            <person name="Churcher L.J.C."/>
            <person name="Mungall K."/>
            <person name="Atkin R."/>
            <person name="Bason N."/>
            <person name="Brooks K."/>
            <person name="Chillingworth T."/>
            <person name="Clark K."/>
            <person name="Doggett J."/>
            <person name="Fraser A."/>
            <person name="Hance Z."/>
            <person name="Hauser H."/>
            <person name="Jagels K."/>
            <person name="Moule S."/>
            <person name="Norbertczak H."/>
            <person name="Ormond D."/>
            <person name="Price C."/>
            <person name="Quail M.A."/>
            <person name="Sanders M."/>
            <person name="Walker D."/>
            <person name="Whitehead S."/>
            <person name="Salmond G.P.C."/>
            <person name="Birch P.R.J."/>
            <person name="Parkhill J."/>
            <person name="Toth I.K."/>
        </authorList>
    </citation>
    <scope>NUCLEOTIDE SEQUENCE [LARGE SCALE GENOMIC DNA]</scope>
    <source>
        <strain>SCRI 1043 / ATCC BAA-672</strain>
    </source>
</reference>
<keyword id="KW-1185">Reference proteome</keyword>
<sequence length="107" mass="12396">MDLNNRLTEDEALEQAYDIFLELAADNLDPADILLFNLQFEERGGAELFDPAEDWAEHVDFDLNPDFFAEVVIGLAEQEGEEITDIFARVLICREKDHKLCHILWKE</sequence>
<protein>
    <recommendedName>
        <fullName evidence="1">Putative double-stranded DNA mimic protein ECA2319</fullName>
    </recommendedName>
</protein>
<gene>
    <name type="ordered locus">ECA2319</name>
</gene>
<accession>Q6D4S1</accession>
<dbReference type="EMBL" id="BX950851">
    <property type="protein sequence ID" value="CAG75222.1"/>
    <property type="molecule type" value="Genomic_DNA"/>
</dbReference>
<dbReference type="RefSeq" id="WP_011093876.1">
    <property type="nucleotide sequence ID" value="NC_004547.2"/>
</dbReference>
<dbReference type="SMR" id="Q6D4S1"/>
<dbReference type="STRING" id="218491.ECA2319"/>
<dbReference type="KEGG" id="eca:ECA2319"/>
<dbReference type="eggNOG" id="COG3099">
    <property type="taxonomic scope" value="Bacteria"/>
</dbReference>
<dbReference type="HOGENOM" id="CLU_143392_0_0_6"/>
<dbReference type="OrthoDB" id="5677388at2"/>
<dbReference type="Proteomes" id="UP000007966">
    <property type="component" value="Chromosome"/>
</dbReference>
<dbReference type="Gene3D" id="3.10.450.140">
    <property type="entry name" value="dsDNA mimic, putative"/>
    <property type="match status" value="1"/>
</dbReference>
<dbReference type="HAMAP" id="MF_00680">
    <property type="entry name" value="Put_dsDNA_mimic"/>
    <property type="match status" value="1"/>
</dbReference>
<dbReference type="InterPro" id="IPR007376">
    <property type="entry name" value="dsDNA_mimic_put"/>
</dbReference>
<dbReference type="InterPro" id="IPR036763">
    <property type="entry name" value="Put_dsDNA_mimic_sf"/>
</dbReference>
<dbReference type="NCBIfam" id="NF003469">
    <property type="entry name" value="PRK05094.1"/>
    <property type="match status" value="1"/>
</dbReference>
<dbReference type="Pfam" id="PF04269">
    <property type="entry name" value="DUF440"/>
    <property type="match status" value="1"/>
</dbReference>
<dbReference type="PIRSF" id="PIRSF004916">
    <property type="entry name" value="UCP004916"/>
    <property type="match status" value="1"/>
</dbReference>
<dbReference type="SUPFAM" id="SSF102816">
    <property type="entry name" value="Putative dsDNA mimic"/>
    <property type="match status" value="1"/>
</dbReference>
<organism>
    <name type="scientific">Pectobacterium atrosepticum (strain SCRI 1043 / ATCC BAA-672)</name>
    <name type="common">Erwinia carotovora subsp. atroseptica</name>
    <dbReference type="NCBI Taxonomy" id="218491"/>
    <lineage>
        <taxon>Bacteria</taxon>
        <taxon>Pseudomonadati</taxon>
        <taxon>Pseudomonadota</taxon>
        <taxon>Gammaproteobacteria</taxon>
        <taxon>Enterobacterales</taxon>
        <taxon>Pectobacteriaceae</taxon>
        <taxon>Pectobacterium</taxon>
    </lineage>
</organism>
<feature type="chain" id="PRO_1000044908" description="Putative double-stranded DNA mimic protein ECA2319">
    <location>
        <begin position="1"/>
        <end position="107"/>
    </location>
</feature>
<proteinExistence type="inferred from homology"/>
<name>Y2319_PECAS</name>
<comment type="function">
    <text evidence="1">May act as a double-stranded DNA (dsDNA) mimic. Probably regulates the activity of a dsDNA-binding protein.</text>
</comment>
<comment type="similarity">
    <text evidence="1">Belongs to the putative dsDNA mimic protein family.</text>
</comment>